<proteinExistence type="inferred from homology"/>
<name>RSXB_ECOLC</name>
<protein>
    <recommendedName>
        <fullName evidence="1">Ion-translocating oxidoreductase complex subunit B</fullName>
        <ecNumber evidence="1">7.-.-.-</ecNumber>
    </recommendedName>
    <alternativeName>
        <fullName evidence="1">Rsx electron transport complex subunit B</fullName>
    </alternativeName>
</protein>
<reference key="1">
    <citation type="submission" date="2008-02" db="EMBL/GenBank/DDBJ databases">
        <title>Complete sequence of Escherichia coli C str. ATCC 8739.</title>
        <authorList>
            <person name="Copeland A."/>
            <person name="Lucas S."/>
            <person name="Lapidus A."/>
            <person name="Glavina del Rio T."/>
            <person name="Dalin E."/>
            <person name="Tice H."/>
            <person name="Bruce D."/>
            <person name="Goodwin L."/>
            <person name="Pitluck S."/>
            <person name="Kiss H."/>
            <person name="Brettin T."/>
            <person name="Detter J.C."/>
            <person name="Han C."/>
            <person name="Kuske C.R."/>
            <person name="Schmutz J."/>
            <person name="Larimer F."/>
            <person name="Land M."/>
            <person name="Hauser L."/>
            <person name="Kyrpides N."/>
            <person name="Mikhailova N."/>
            <person name="Ingram L."/>
            <person name="Richardson P."/>
        </authorList>
    </citation>
    <scope>NUCLEOTIDE SEQUENCE [LARGE SCALE GENOMIC DNA]</scope>
    <source>
        <strain>ATCC 8739 / DSM 1576 / NBRC 3972 / NCIMB 8545 / WDCM 00012 / Crooks</strain>
    </source>
</reference>
<organism>
    <name type="scientific">Escherichia coli (strain ATCC 8739 / DSM 1576 / NBRC 3972 / NCIMB 8545 / WDCM 00012 / Crooks)</name>
    <dbReference type="NCBI Taxonomy" id="481805"/>
    <lineage>
        <taxon>Bacteria</taxon>
        <taxon>Pseudomonadati</taxon>
        <taxon>Pseudomonadota</taxon>
        <taxon>Gammaproteobacteria</taxon>
        <taxon>Enterobacterales</taxon>
        <taxon>Enterobacteriaceae</taxon>
        <taxon>Escherichia</taxon>
    </lineage>
</organism>
<sequence>MNAIWIAVAAVSLLGLAFGAILGYASRRFAVEDDPVVEKIDEILPQSQCGQCGYPGCRPYAEAISCNGEKINRCAPGGEAVMLKIAELLNVEPQPLDGEAQEITPARMVAVIDENNCIGCTKCIQACPVDAIVGATRAMHTVMSDLCTGCNLCVDPCPTHCISLQPVAETPDSWKWDLNTIPVRIIPVEHHA</sequence>
<keyword id="KW-0004">4Fe-4S</keyword>
<keyword id="KW-0997">Cell inner membrane</keyword>
<keyword id="KW-1003">Cell membrane</keyword>
<keyword id="KW-0249">Electron transport</keyword>
<keyword id="KW-0408">Iron</keyword>
<keyword id="KW-0411">Iron-sulfur</keyword>
<keyword id="KW-0472">Membrane</keyword>
<keyword id="KW-0479">Metal-binding</keyword>
<keyword id="KW-0677">Repeat</keyword>
<keyword id="KW-1278">Translocase</keyword>
<keyword id="KW-0813">Transport</keyword>
<gene>
    <name evidence="1" type="primary">rsxB</name>
    <name type="ordered locus">EcolC_2001</name>
</gene>
<evidence type="ECO:0000255" key="1">
    <source>
        <dbReference type="HAMAP-Rule" id="MF_00463"/>
    </source>
</evidence>
<comment type="function">
    <text evidence="1">Part of a membrane-bound complex that couples electron transfer with translocation of ions across the membrane. Required to maintain the reduced state of SoxR.</text>
</comment>
<comment type="cofactor">
    <cofactor evidence="1">
        <name>[4Fe-4S] cluster</name>
        <dbReference type="ChEBI" id="CHEBI:49883"/>
    </cofactor>
    <text evidence="1">Binds 3 [4Fe-4S] clusters.</text>
</comment>
<comment type="subunit">
    <text evidence="1">The complex is composed of six subunits: RsxA, RsxB, RsxC, RsxD, RsxE and RsxG.</text>
</comment>
<comment type="subcellular location">
    <subcellularLocation>
        <location evidence="1">Cell inner membrane</location>
    </subcellularLocation>
</comment>
<comment type="similarity">
    <text evidence="1">Belongs to the 4Fe4S bacterial-type ferredoxin family. RnfB subfamily.</text>
</comment>
<dbReference type="EC" id="7.-.-.-" evidence="1"/>
<dbReference type="EMBL" id="CP000946">
    <property type="protein sequence ID" value="ACA77647.1"/>
    <property type="molecule type" value="Genomic_DNA"/>
</dbReference>
<dbReference type="RefSeq" id="WP_000991805.1">
    <property type="nucleotide sequence ID" value="NZ_MTFT01000006.1"/>
</dbReference>
<dbReference type="KEGG" id="ecl:EcolC_2001"/>
<dbReference type="HOGENOM" id="CLU_063448_2_0_6"/>
<dbReference type="GO" id="GO:0005886">
    <property type="term" value="C:plasma membrane"/>
    <property type="evidence" value="ECO:0007669"/>
    <property type="project" value="UniProtKB-SubCell"/>
</dbReference>
<dbReference type="GO" id="GO:0051539">
    <property type="term" value="F:4 iron, 4 sulfur cluster binding"/>
    <property type="evidence" value="ECO:0007669"/>
    <property type="project" value="UniProtKB-UniRule"/>
</dbReference>
<dbReference type="GO" id="GO:0009055">
    <property type="term" value="F:electron transfer activity"/>
    <property type="evidence" value="ECO:0007669"/>
    <property type="project" value="InterPro"/>
</dbReference>
<dbReference type="GO" id="GO:0046872">
    <property type="term" value="F:metal ion binding"/>
    <property type="evidence" value="ECO:0007669"/>
    <property type="project" value="UniProtKB-KW"/>
</dbReference>
<dbReference type="GO" id="GO:0022900">
    <property type="term" value="P:electron transport chain"/>
    <property type="evidence" value="ECO:0007669"/>
    <property type="project" value="UniProtKB-UniRule"/>
</dbReference>
<dbReference type="FunFam" id="1.10.15.40:FF:000001">
    <property type="entry name" value="Ion-translocating oxidoreductase complex subunit B"/>
    <property type="match status" value="1"/>
</dbReference>
<dbReference type="Gene3D" id="3.30.70.20">
    <property type="match status" value="1"/>
</dbReference>
<dbReference type="Gene3D" id="1.10.15.40">
    <property type="entry name" value="Electron transport complex subunit B, putative Fe-S cluster"/>
    <property type="match status" value="1"/>
</dbReference>
<dbReference type="HAMAP" id="MF_00463">
    <property type="entry name" value="RsxB_RnfB"/>
    <property type="match status" value="1"/>
</dbReference>
<dbReference type="InterPro" id="IPR007202">
    <property type="entry name" value="4Fe-4S_dom"/>
</dbReference>
<dbReference type="InterPro" id="IPR017896">
    <property type="entry name" value="4Fe4S_Fe-S-bd"/>
</dbReference>
<dbReference type="InterPro" id="IPR017900">
    <property type="entry name" value="4Fe4S_Fe_S_CS"/>
</dbReference>
<dbReference type="InterPro" id="IPR050395">
    <property type="entry name" value="4Fe4S_Ferredoxin_RnfB"/>
</dbReference>
<dbReference type="InterPro" id="IPR010207">
    <property type="entry name" value="Elect_transpt_cplx_RnfB/RsxB"/>
</dbReference>
<dbReference type="InterPro" id="IPR016463">
    <property type="entry name" value="RnfB/RsxB_Proteobac"/>
</dbReference>
<dbReference type="NCBIfam" id="NF003475">
    <property type="entry name" value="PRK05113.1"/>
    <property type="match status" value="1"/>
</dbReference>
<dbReference type="NCBIfam" id="TIGR01944">
    <property type="entry name" value="rnfB"/>
    <property type="match status" value="1"/>
</dbReference>
<dbReference type="PANTHER" id="PTHR43560">
    <property type="entry name" value="ION-TRANSLOCATING OXIDOREDUCTASE COMPLEX SUBUNIT B"/>
    <property type="match status" value="1"/>
</dbReference>
<dbReference type="PANTHER" id="PTHR43560:SF1">
    <property type="entry name" value="ION-TRANSLOCATING OXIDOREDUCTASE COMPLEX SUBUNIT B"/>
    <property type="match status" value="1"/>
</dbReference>
<dbReference type="Pfam" id="PF14697">
    <property type="entry name" value="Fer4_21"/>
    <property type="match status" value="1"/>
</dbReference>
<dbReference type="Pfam" id="PF04060">
    <property type="entry name" value="FeS"/>
    <property type="match status" value="1"/>
</dbReference>
<dbReference type="PIRSF" id="PIRSF005784">
    <property type="entry name" value="Elect_transpt_RnfB"/>
    <property type="match status" value="1"/>
</dbReference>
<dbReference type="SUPFAM" id="SSF54862">
    <property type="entry name" value="4Fe-4S ferredoxins"/>
    <property type="match status" value="1"/>
</dbReference>
<dbReference type="PROSITE" id="PS51656">
    <property type="entry name" value="4FE4S"/>
    <property type="match status" value="1"/>
</dbReference>
<dbReference type="PROSITE" id="PS00198">
    <property type="entry name" value="4FE4S_FER_1"/>
    <property type="match status" value="2"/>
</dbReference>
<dbReference type="PROSITE" id="PS51379">
    <property type="entry name" value="4FE4S_FER_2"/>
    <property type="match status" value="2"/>
</dbReference>
<accession>B1IQC6</accession>
<feature type="chain" id="PRO_1000081162" description="Ion-translocating oxidoreductase complex subunit B">
    <location>
        <begin position="1"/>
        <end position="192"/>
    </location>
</feature>
<feature type="domain" description="4Fe-4S" evidence="1">
    <location>
        <begin position="32"/>
        <end position="91"/>
    </location>
</feature>
<feature type="domain" description="4Fe-4S ferredoxin-type 1" evidence="1">
    <location>
        <begin position="108"/>
        <end position="137"/>
    </location>
</feature>
<feature type="domain" description="4Fe-4S ferredoxin-type 2" evidence="1">
    <location>
        <begin position="138"/>
        <end position="167"/>
    </location>
</feature>
<feature type="region of interest" description="Hydrophobic" evidence="1">
    <location>
        <begin position="1"/>
        <end position="26"/>
    </location>
</feature>
<feature type="binding site" evidence="1">
    <location>
        <position position="49"/>
    </location>
    <ligand>
        <name>[4Fe-4S] cluster</name>
        <dbReference type="ChEBI" id="CHEBI:49883"/>
        <label>1</label>
    </ligand>
</feature>
<feature type="binding site" evidence="1">
    <location>
        <position position="52"/>
    </location>
    <ligand>
        <name>[4Fe-4S] cluster</name>
        <dbReference type="ChEBI" id="CHEBI:49883"/>
        <label>1</label>
    </ligand>
</feature>
<feature type="binding site" evidence="1">
    <location>
        <position position="57"/>
    </location>
    <ligand>
        <name>[4Fe-4S] cluster</name>
        <dbReference type="ChEBI" id="CHEBI:49883"/>
        <label>1</label>
    </ligand>
</feature>
<feature type="binding site" evidence="1">
    <location>
        <position position="74"/>
    </location>
    <ligand>
        <name>[4Fe-4S] cluster</name>
        <dbReference type="ChEBI" id="CHEBI:49883"/>
        <label>1</label>
    </ligand>
</feature>
<feature type="binding site" evidence="1">
    <location>
        <position position="117"/>
    </location>
    <ligand>
        <name>[4Fe-4S] cluster</name>
        <dbReference type="ChEBI" id="CHEBI:49883"/>
        <label>2</label>
    </ligand>
</feature>
<feature type="binding site" evidence="1">
    <location>
        <position position="120"/>
    </location>
    <ligand>
        <name>[4Fe-4S] cluster</name>
        <dbReference type="ChEBI" id="CHEBI:49883"/>
        <label>2</label>
    </ligand>
</feature>
<feature type="binding site" evidence="1">
    <location>
        <position position="123"/>
    </location>
    <ligand>
        <name>[4Fe-4S] cluster</name>
        <dbReference type="ChEBI" id="CHEBI:49883"/>
        <label>2</label>
    </ligand>
</feature>
<feature type="binding site" evidence="1">
    <location>
        <position position="127"/>
    </location>
    <ligand>
        <name>[4Fe-4S] cluster</name>
        <dbReference type="ChEBI" id="CHEBI:49883"/>
        <label>3</label>
    </ligand>
</feature>
<feature type="binding site" evidence="1">
    <location>
        <position position="147"/>
    </location>
    <ligand>
        <name>[4Fe-4S] cluster</name>
        <dbReference type="ChEBI" id="CHEBI:49883"/>
        <label>3</label>
    </ligand>
</feature>
<feature type="binding site" evidence="1">
    <location>
        <position position="150"/>
    </location>
    <ligand>
        <name>[4Fe-4S] cluster</name>
        <dbReference type="ChEBI" id="CHEBI:49883"/>
        <label>3</label>
    </ligand>
</feature>
<feature type="binding site" evidence="1">
    <location>
        <position position="153"/>
    </location>
    <ligand>
        <name>[4Fe-4S] cluster</name>
        <dbReference type="ChEBI" id="CHEBI:49883"/>
        <label>3</label>
    </ligand>
</feature>
<feature type="binding site" evidence="1">
    <location>
        <position position="157"/>
    </location>
    <ligand>
        <name>[4Fe-4S] cluster</name>
        <dbReference type="ChEBI" id="CHEBI:49883"/>
        <label>2</label>
    </ligand>
</feature>